<dbReference type="EC" id="7.-.-.-" evidence="1"/>
<dbReference type="EMBL" id="CP001252">
    <property type="protein sequence ID" value="ACK46775.1"/>
    <property type="molecule type" value="Genomic_DNA"/>
</dbReference>
<dbReference type="RefSeq" id="WP_012587729.1">
    <property type="nucleotide sequence ID" value="NC_011663.1"/>
</dbReference>
<dbReference type="SMR" id="B8E551"/>
<dbReference type="KEGG" id="sbp:Sbal223_2276"/>
<dbReference type="HOGENOM" id="CLU_042020_0_0_6"/>
<dbReference type="Proteomes" id="UP000002507">
    <property type="component" value="Chromosome"/>
</dbReference>
<dbReference type="GO" id="GO:0005886">
    <property type="term" value="C:plasma membrane"/>
    <property type="evidence" value="ECO:0007669"/>
    <property type="project" value="UniProtKB-SubCell"/>
</dbReference>
<dbReference type="GO" id="GO:0022900">
    <property type="term" value="P:electron transport chain"/>
    <property type="evidence" value="ECO:0007669"/>
    <property type="project" value="UniProtKB-UniRule"/>
</dbReference>
<dbReference type="GO" id="GO:0055085">
    <property type="term" value="P:transmembrane transport"/>
    <property type="evidence" value="ECO:0007669"/>
    <property type="project" value="InterPro"/>
</dbReference>
<dbReference type="HAMAP" id="MF_00462">
    <property type="entry name" value="RsxD_RnfD"/>
    <property type="match status" value="1"/>
</dbReference>
<dbReference type="InterPro" id="IPR004338">
    <property type="entry name" value="NqrB/RnfD"/>
</dbReference>
<dbReference type="InterPro" id="IPR011303">
    <property type="entry name" value="RnfD_bac"/>
</dbReference>
<dbReference type="NCBIfam" id="NF002011">
    <property type="entry name" value="PRK00816.1"/>
    <property type="match status" value="1"/>
</dbReference>
<dbReference type="NCBIfam" id="TIGR01946">
    <property type="entry name" value="rnfD"/>
    <property type="match status" value="1"/>
</dbReference>
<dbReference type="PANTHER" id="PTHR30578">
    <property type="entry name" value="ELECTRON TRANSPORT COMPLEX PROTEIN RNFD"/>
    <property type="match status" value="1"/>
</dbReference>
<dbReference type="PANTHER" id="PTHR30578:SF0">
    <property type="entry name" value="ION-TRANSLOCATING OXIDOREDUCTASE COMPLEX SUBUNIT D"/>
    <property type="match status" value="1"/>
</dbReference>
<dbReference type="Pfam" id="PF03116">
    <property type="entry name" value="NQR2_RnfD_RnfE"/>
    <property type="match status" value="1"/>
</dbReference>
<gene>
    <name evidence="1" type="primary">rnfD</name>
    <name type="ordered locus">Sbal223_2276</name>
</gene>
<evidence type="ECO:0000255" key="1">
    <source>
        <dbReference type="HAMAP-Rule" id="MF_00462"/>
    </source>
</evidence>
<accession>B8E551</accession>
<sequence length="349" mass="37490">MAFKIASSPHVTRNLHTSTVMQRVILCLLPGLVVQCAFFGWGTLVQVLLAILVALSCEAAVMKLRNRNIKASLSDNSAMLTAILIGVAIPPLAPWWMIVMGTAFAIVIVKHLYGGLGHNLFNPAMAAYVLLLVSFPVQMTTWIAPSTVALHSPSLVESLQLIFNVGAHVNMEQFRLGIDGMTMATPLDTLKTDLSMGLTTTESLTKAIFDGSTGVGWFWVNLAYLAGGLVLLKLKAIRWHISTGVLLGLFVASSIGFLLSPDTQASPLMHLFSGATMLAAFFIATDPVTAATSSRGRIIFGALIGVLVYIIRTKGGYPDAFAFAVLLANLCAPFIDYYVRPRTYGHSTS</sequence>
<name>RNFD_SHEB2</name>
<proteinExistence type="inferred from homology"/>
<comment type="function">
    <text evidence="1">Part of a membrane-bound complex that couples electron transfer with translocation of ions across the membrane.</text>
</comment>
<comment type="cofactor">
    <cofactor evidence="1">
        <name>FMN</name>
        <dbReference type="ChEBI" id="CHEBI:58210"/>
    </cofactor>
</comment>
<comment type="subunit">
    <text evidence="1">The complex is composed of six subunits: RnfA, RnfB, RnfC, RnfD, RnfE and RnfG.</text>
</comment>
<comment type="subcellular location">
    <subcellularLocation>
        <location evidence="1">Cell inner membrane</location>
        <topology evidence="1">Multi-pass membrane protein</topology>
    </subcellularLocation>
</comment>
<comment type="similarity">
    <text evidence="1">Belongs to the NqrB/RnfD family.</text>
</comment>
<reference key="1">
    <citation type="submission" date="2008-12" db="EMBL/GenBank/DDBJ databases">
        <title>Complete sequence of chromosome of Shewanella baltica OS223.</title>
        <authorList>
            <consortium name="US DOE Joint Genome Institute"/>
            <person name="Lucas S."/>
            <person name="Copeland A."/>
            <person name="Lapidus A."/>
            <person name="Glavina del Rio T."/>
            <person name="Dalin E."/>
            <person name="Tice H."/>
            <person name="Bruce D."/>
            <person name="Goodwin L."/>
            <person name="Pitluck S."/>
            <person name="Chertkov O."/>
            <person name="Meincke L."/>
            <person name="Brettin T."/>
            <person name="Detter J.C."/>
            <person name="Han C."/>
            <person name="Kuske C.R."/>
            <person name="Larimer F."/>
            <person name="Land M."/>
            <person name="Hauser L."/>
            <person name="Kyrpides N."/>
            <person name="Ovchinnikova G."/>
            <person name="Brettar I."/>
            <person name="Rodrigues J."/>
            <person name="Konstantinidis K."/>
            <person name="Tiedje J."/>
        </authorList>
    </citation>
    <scope>NUCLEOTIDE SEQUENCE [LARGE SCALE GENOMIC DNA]</scope>
    <source>
        <strain>OS223</strain>
    </source>
</reference>
<keyword id="KW-0997">Cell inner membrane</keyword>
<keyword id="KW-1003">Cell membrane</keyword>
<keyword id="KW-0249">Electron transport</keyword>
<keyword id="KW-0285">Flavoprotein</keyword>
<keyword id="KW-0288">FMN</keyword>
<keyword id="KW-0472">Membrane</keyword>
<keyword id="KW-0597">Phosphoprotein</keyword>
<keyword id="KW-1278">Translocase</keyword>
<keyword id="KW-0812">Transmembrane</keyword>
<keyword id="KW-1133">Transmembrane helix</keyword>
<keyword id="KW-0813">Transport</keyword>
<organism>
    <name type="scientific">Shewanella baltica (strain OS223)</name>
    <dbReference type="NCBI Taxonomy" id="407976"/>
    <lineage>
        <taxon>Bacteria</taxon>
        <taxon>Pseudomonadati</taxon>
        <taxon>Pseudomonadota</taxon>
        <taxon>Gammaproteobacteria</taxon>
        <taxon>Alteromonadales</taxon>
        <taxon>Shewanellaceae</taxon>
        <taxon>Shewanella</taxon>
    </lineage>
</organism>
<protein>
    <recommendedName>
        <fullName evidence="1">Ion-translocating oxidoreductase complex subunit D</fullName>
        <ecNumber evidence="1">7.-.-.-</ecNumber>
    </recommendedName>
    <alternativeName>
        <fullName evidence="1">Rnf electron transport complex subunit D</fullName>
    </alternativeName>
</protein>
<feature type="chain" id="PRO_1000191681" description="Ion-translocating oxidoreductase complex subunit D">
    <location>
        <begin position="1"/>
        <end position="349"/>
    </location>
</feature>
<feature type="transmembrane region" description="Helical" evidence="1">
    <location>
        <begin position="20"/>
        <end position="42"/>
    </location>
</feature>
<feature type="transmembrane region" description="Helical" evidence="1">
    <location>
        <begin position="77"/>
        <end position="99"/>
    </location>
</feature>
<feature type="transmembrane region" description="Helical" evidence="1">
    <location>
        <begin position="124"/>
        <end position="144"/>
    </location>
</feature>
<feature type="transmembrane region" description="Helical" evidence="1">
    <location>
        <begin position="212"/>
        <end position="232"/>
    </location>
</feature>
<feature type="transmembrane region" description="Helical" evidence="1">
    <location>
        <begin position="239"/>
        <end position="259"/>
    </location>
</feature>
<feature type="transmembrane region" description="Helical" evidence="1">
    <location>
        <begin position="265"/>
        <end position="285"/>
    </location>
</feature>
<feature type="transmembrane region" description="Helical" evidence="1">
    <location>
        <begin position="291"/>
        <end position="311"/>
    </location>
</feature>
<feature type="transmembrane region" description="Helical" evidence="1">
    <location>
        <begin position="315"/>
        <end position="335"/>
    </location>
</feature>
<feature type="modified residue" description="FMN phosphoryl threonine" evidence="1">
    <location>
        <position position="185"/>
    </location>
</feature>